<evidence type="ECO:0000255" key="1">
    <source>
        <dbReference type="HAMAP-Rule" id="MF_01820"/>
    </source>
</evidence>
<evidence type="ECO:0000255" key="2">
    <source>
        <dbReference type="PROSITE-ProRule" id="PRU01058"/>
    </source>
</evidence>
<evidence type="ECO:0000256" key="3">
    <source>
        <dbReference type="SAM" id="MobiDB-lite"/>
    </source>
</evidence>
<comment type="function">
    <text evidence="1">One of several proteins that assist in the late maturation steps of the functional core of the 30S ribosomal subunit. Helps release RbfA from mature subunits. May play a role in the assembly of ribosomal proteins into the subunit. Circularly permuted GTPase that catalyzes slow GTP hydrolysis, GTPase activity is stimulated by the 30S ribosomal subunit.</text>
</comment>
<comment type="cofactor">
    <cofactor evidence="1">
        <name>Zn(2+)</name>
        <dbReference type="ChEBI" id="CHEBI:29105"/>
    </cofactor>
    <text evidence="1">Binds 1 zinc ion per subunit.</text>
</comment>
<comment type="subunit">
    <text evidence="1">Monomer. Associates with 30S ribosomal subunit, binds 16S rRNA.</text>
</comment>
<comment type="subcellular location">
    <subcellularLocation>
        <location evidence="1">Cytoplasm</location>
    </subcellularLocation>
</comment>
<comment type="similarity">
    <text evidence="1">Belongs to the TRAFAC class YlqF/YawG GTPase family. RsgA subfamily.</text>
</comment>
<proteinExistence type="inferred from homology"/>
<accession>Q3JQ14</accession>
<dbReference type="EC" id="3.6.1.-" evidence="1"/>
<dbReference type="EMBL" id="CP000124">
    <property type="protein sequence ID" value="ABA50062.1"/>
    <property type="molecule type" value="Genomic_DNA"/>
</dbReference>
<dbReference type="RefSeq" id="WP_004527494.1">
    <property type="nucleotide sequence ID" value="NC_007434.1"/>
</dbReference>
<dbReference type="SMR" id="Q3JQ14"/>
<dbReference type="EnsemblBacteria" id="ABA50062">
    <property type="protein sequence ID" value="ABA50062"/>
    <property type="gene ID" value="BURPS1710b_2960"/>
</dbReference>
<dbReference type="GeneID" id="93061071"/>
<dbReference type="KEGG" id="bpm:BURPS1710b_2960"/>
<dbReference type="HOGENOM" id="CLU_033617_2_0_4"/>
<dbReference type="Proteomes" id="UP000002700">
    <property type="component" value="Chromosome I"/>
</dbReference>
<dbReference type="GO" id="GO:0005737">
    <property type="term" value="C:cytoplasm"/>
    <property type="evidence" value="ECO:0007669"/>
    <property type="project" value="UniProtKB-SubCell"/>
</dbReference>
<dbReference type="GO" id="GO:0005525">
    <property type="term" value="F:GTP binding"/>
    <property type="evidence" value="ECO:0007669"/>
    <property type="project" value="UniProtKB-UniRule"/>
</dbReference>
<dbReference type="GO" id="GO:0003924">
    <property type="term" value="F:GTPase activity"/>
    <property type="evidence" value="ECO:0007669"/>
    <property type="project" value="UniProtKB-UniRule"/>
</dbReference>
<dbReference type="GO" id="GO:0046872">
    <property type="term" value="F:metal ion binding"/>
    <property type="evidence" value="ECO:0007669"/>
    <property type="project" value="UniProtKB-KW"/>
</dbReference>
<dbReference type="GO" id="GO:0019843">
    <property type="term" value="F:rRNA binding"/>
    <property type="evidence" value="ECO:0007669"/>
    <property type="project" value="UniProtKB-KW"/>
</dbReference>
<dbReference type="GO" id="GO:0042274">
    <property type="term" value="P:ribosomal small subunit biogenesis"/>
    <property type="evidence" value="ECO:0007669"/>
    <property type="project" value="UniProtKB-UniRule"/>
</dbReference>
<dbReference type="CDD" id="cd04466">
    <property type="entry name" value="S1_YloQ_GTPase"/>
    <property type="match status" value="1"/>
</dbReference>
<dbReference type="CDD" id="cd01854">
    <property type="entry name" value="YjeQ_EngC"/>
    <property type="match status" value="1"/>
</dbReference>
<dbReference type="Gene3D" id="2.40.50.140">
    <property type="entry name" value="Nucleic acid-binding proteins"/>
    <property type="match status" value="1"/>
</dbReference>
<dbReference type="Gene3D" id="3.40.50.300">
    <property type="entry name" value="P-loop containing nucleotide triphosphate hydrolases"/>
    <property type="match status" value="1"/>
</dbReference>
<dbReference type="Gene3D" id="1.10.40.50">
    <property type="entry name" value="Probable gtpase engc, domain 3"/>
    <property type="match status" value="1"/>
</dbReference>
<dbReference type="HAMAP" id="MF_01820">
    <property type="entry name" value="GTPase_RsgA"/>
    <property type="match status" value="1"/>
</dbReference>
<dbReference type="InterPro" id="IPR030378">
    <property type="entry name" value="G_CP_dom"/>
</dbReference>
<dbReference type="InterPro" id="IPR012340">
    <property type="entry name" value="NA-bd_OB-fold"/>
</dbReference>
<dbReference type="InterPro" id="IPR027417">
    <property type="entry name" value="P-loop_NTPase"/>
</dbReference>
<dbReference type="InterPro" id="IPR004881">
    <property type="entry name" value="Ribosome_biogen_GTPase_RsgA"/>
</dbReference>
<dbReference type="InterPro" id="IPR010914">
    <property type="entry name" value="RsgA_GTPase_dom"/>
</dbReference>
<dbReference type="InterPro" id="IPR031944">
    <property type="entry name" value="RsgA_N"/>
</dbReference>
<dbReference type="NCBIfam" id="TIGR00157">
    <property type="entry name" value="ribosome small subunit-dependent GTPase A"/>
    <property type="match status" value="1"/>
</dbReference>
<dbReference type="PANTHER" id="PTHR32120">
    <property type="entry name" value="SMALL RIBOSOMAL SUBUNIT BIOGENESIS GTPASE RSGA"/>
    <property type="match status" value="1"/>
</dbReference>
<dbReference type="PANTHER" id="PTHR32120:SF11">
    <property type="entry name" value="SMALL RIBOSOMAL SUBUNIT BIOGENESIS GTPASE RSGA 1, MITOCHONDRIAL-RELATED"/>
    <property type="match status" value="1"/>
</dbReference>
<dbReference type="Pfam" id="PF03193">
    <property type="entry name" value="RsgA_GTPase"/>
    <property type="match status" value="1"/>
</dbReference>
<dbReference type="SUPFAM" id="SSF50249">
    <property type="entry name" value="Nucleic acid-binding proteins"/>
    <property type="match status" value="1"/>
</dbReference>
<dbReference type="SUPFAM" id="SSF52540">
    <property type="entry name" value="P-loop containing nucleoside triphosphate hydrolases"/>
    <property type="match status" value="1"/>
</dbReference>
<dbReference type="PROSITE" id="PS50936">
    <property type="entry name" value="ENGC_GTPASE"/>
    <property type="match status" value="1"/>
</dbReference>
<dbReference type="PROSITE" id="PS51721">
    <property type="entry name" value="G_CP"/>
    <property type="match status" value="1"/>
</dbReference>
<protein>
    <recommendedName>
        <fullName evidence="1">Small ribosomal subunit biogenesis GTPase RsgA</fullName>
        <ecNumber evidence="1">3.6.1.-</ecNumber>
    </recommendedName>
</protein>
<organism>
    <name type="scientific">Burkholderia pseudomallei (strain 1710b)</name>
    <dbReference type="NCBI Taxonomy" id="320372"/>
    <lineage>
        <taxon>Bacteria</taxon>
        <taxon>Pseudomonadati</taxon>
        <taxon>Pseudomonadota</taxon>
        <taxon>Betaproteobacteria</taxon>
        <taxon>Burkholderiales</taxon>
        <taxon>Burkholderiaceae</taxon>
        <taxon>Burkholderia</taxon>
        <taxon>pseudomallei group</taxon>
    </lineage>
</organism>
<reference key="1">
    <citation type="journal article" date="2010" name="Genome Biol. Evol.">
        <title>Continuing evolution of Burkholderia mallei through genome reduction and large-scale rearrangements.</title>
        <authorList>
            <person name="Losada L."/>
            <person name="Ronning C.M."/>
            <person name="DeShazer D."/>
            <person name="Woods D."/>
            <person name="Fedorova N."/>
            <person name="Kim H.S."/>
            <person name="Shabalina S.A."/>
            <person name="Pearson T.R."/>
            <person name="Brinkac L."/>
            <person name="Tan P."/>
            <person name="Nandi T."/>
            <person name="Crabtree J."/>
            <person name="Badger J."/>
            <person name="Beckstrom-Sternberg S."/>
            <person name="Saqib M."/>
            <person name="Schutzer S.E."/>
            <person name="Keim P."/>
            <person name="Nierman W.C."/>
        </authorList>
    </citation>
    <scope>NUCLEOTIDE SEQUENCE [LARGE SCALE GENOMIC DNA]</scope>
    <source>
        <strain>1710b</strain>
    </source>
</reference>
<feature type="chain" id="PRO_1000216032" description="Small ribosomal subunit biogenesis GTPase RsgA">
    <location>
        <begin position="1"/>
        <end position="314"/>
    </location>
</feature>
<feature type="domain" description="CP-type G" evidence="2">
    <location>
        <begin position="85"/>
        <end position="246"/>
    </location>
</feature>
<feature type="region of interest" description="Disordered" evidence="3">
    <location>
        <begin position="1"/>
        <end position="21"/>
    </location>
</feature>
<feature type="binding site" evidence="1">
    <location>
        <begin position="134"/>
        <end position="137"/>
    </location>
    <ligand>
        <name>GTP</name>
        <dbReference type="ChEBI" id="CHEBI:37565"/>
    </ligand>
</feature>
<feature type="binding site" evidence="1">
    <location>
        <begin position="188"/>
        <end position="196"/>
    </location>
    <ligand>
        <name>GTP</name>
        <dbReference type="ChEBI" id="CHEBI:37565"/>
    </ligand>
</feature>
<feature type="binding site" evidence="1">
    <location>
        <position position="270"/>
    </location>
    <ligand>
        <name>Zn(2+)</name>
        <dbReference type="ChEBI" id="CHEBI:29105"/>
    </ligand>
</feature>
<feature type="binding site" evidence="1">
    <location>
        <position position="275"/>
    </location>
    <ligand>
        <name>Zn(2+)</name>
        <dbReference type="ChEBI" id="CHEBI:29105"/>
    </ligand>
</feature>
<feature type="binding site" evidence="1">
    <location>
        <position position="277"/>
    </location>
    <ligand>
        <name>Zn(2+)</name>
        <dbReference type="ChEBI" id="CHEBI:29105"/>
    </ligand>
</feature>
<feature type="binding site" evidence="1">
    <location>
        <position position="283"/>
    </location>
    <ligand>
        <name>Zn(2+)</name>
        <dbReference type="ChEBI" id="CHEBI:29105"/>
    </ligand>
</feature>
<name>RSGA_BURP1</name>
<keyword id="KW-0963">Cytoplasm</keyword>
<keyword id="KW-0342">GTP-binding</keyword>
<keyword id="KW-0378">Hydrolase</keyword>
<keyword id="KW-0479">Metal-binding</keyword>
<keyword id="KW-0547">Nucleotide-binding</keyword>
<keyword id="KW-0690">Ribosome biogenesis</keyword>
<keyword id="KW-0694">RNA-binding</keyword>
<keyword id="KW-0699">rRNA-binding</keyword>
<keyword id="KW-0862">Zinc</keyword>
<sequence>MKRAPTKQPAKPAARGGERAQGRVIAAHGRHYIVAPADGGPMLQCFPRGKKSEVAVGDRVAYERTSADQGVIVEIGERRNLLYRSDQFKSKLFAANLDQLLIVLATEPYFSEDLLGRALIAAEANELKPIVVLNKIDVEAALPVARERLAPYRALGYDVLELSVKGAPDDARTQLAPRLAGHSTILLGQSGMGKSTLVNLLVPDAEAATREISAALNSGRHTTTFTRLYPLQDGGALIDSPGFQEFGLYHLTEGRLERAFPEFRPLLAHCRFYNCHHLHEPGCAILEALADGRIAPTRHALYAQLVHEASQIVR</sequence>
<gene>
    <name evidence="1" type="primary">rsgA</name>
    <name type="ordered locus">BURPS1710b_2960</name>
</gene>